<keyword id="KW-0067">ATP-binding</keyword>
<keyword id="KW-0143">Chaperone</keyword>
<keyword id="KW-0547">Nucleotide-binding</keyword>
<keyword id="KW-0597">Phosphoprotein</keyword>
<keyword id="KW-0346">Stress response</keyword>
<name>DNAK_BRUME</name>
<evidence type="ECO:0000250" key="1"/>
<evidence type="ECO:0000256" key="2">
    <source>
        <dbReference type="SAM" id="MobiDB-lite"/>
    </source>
</evidence>
<evidence type="ECO:0000305" key="3"/>
<feature type="chain" id="PRO_0000078430" description="Chaperone protein DnaK">
    <location>
        <begin position="1"/>
        <end position="637"/>
    </location>
</feature>
<feature type="region of interest" description="Disordered" evidence="2">
    <location>
        <begin position="516"/>
        <end position="542"/>
    </location>
</feature>
<feature type="region of interest" description="Disordered" evidence="2">
    <location>
        <begin position="601"/>
        <end position="637"/>
    </location>
</feature>
<feature type="compositionally biased region" description="Basic and acidic residues" evidence="2">
    <location>
        <begin position="516"/>
        <end position="529"/>
    </location>
</feature>
<feature type="compositionally biased region" description="Low complexity" evidence="2">
    <location>
        <begin position="601"/>
        <end position="617"/>
    </location>
</feature>
<feature type="modified residue" description="Phosphothreonine; by autocatalysis" evidence="1">
    <location>
        <position position="198"/>
    </location>
</feature>
<dbReference type="EMBL" id="AE008917">
    <property type="protein sequence ID" value="AAL53183.1"/>
    <property type="status" value="ALT_INIT"/>
    <property type="molecule type" value="Genomic_DNA"/>
</dbReference>
<dbReference type="PIR" id="AD3502">
    <property type="entry name" value="AD3502"/>
</dbReference>
<dbReference type="RefSeq" id="WP_041594641.1">
    <property type="nucleotide sequence ID" value="NC_003317.1"/>
</dbReference>
<dbReference type="SMR" id="Q8YE76"/>
<dbReference type="GeneID" id="29594878"/>
<dbReference type="KEGG" id="bme:BMEI2002"/>
<dbReference type="eggNOG" id="COG0443">
    <property type="taxonomic scope" value="Bacteria"/>
</dbReference>
<dbReference type="PhylomeDB" id="Q8YE76"/>
<dbReference type="PRO" id="PR:Q8YE76"/>
<dbReference type="Proteomes" id="UP000000419">
    <property type="component" value="Chromosome I"/>
</dbReference>
<dbReference type="GO" id="GO:0005524">
    <property type="term" value="F:ATP binding"/>
    <property type="evidence" value="ECO:0007669"/>
    <property type="project" value="UniProtKB-UniRule"/>
</dbReference>
<dbReference type="GO" id="GO:0140662">
    <property type="term" value="F:ATP-dependent protein folding chaperone"/>
    <property type="evidence" value="ECO:0007669"/>
    <property type="project" value="InterPro"/>
</dbReference>
<dbReference type="GO" id="GO:0051082">
    <property type="term" value="F:unfolded protein binding"/>
    <property type="evidence" value="ECO:0007669"/>
    <property type="project" value="InterPro"/>
</dbReference>
<dbReference type="CDD" id="cd11733">
    <property type="entry name" value="ASKHA_NBD_HSP70_HSPA9"/>
    <property type="match status" value="1"/>
</dbReference>
<dbReference type="FunFam" id="2.60.34.10:FF:000014">
    <property type="entry name" value="Chaperone protein DnaK HSP70"/>
    <property type="match status" value="1"/>
</dbReference>
<dbReference type="FunFam" id="3.30.420.40:FF:000020">
    <property type="entry name" value="Chaperone protein HscA homolog"/>
    <property type="match status" value="1"/>
</dbReference>
<dbReference type="FunFam" id="3.30.30.30:FF:000003">
    <property type="entry name" value="Heat shock protein 9"/>
    <property type="match status" value="1"/>
</dbReference>
<dbReference type="FunFam" id="1.20.1270.10:FF:000001">
    <property type="entry name" value="Molecular chaperone DnaK"/>
    <property type="match status" value="1"/>
</dbReference>
<dbReference type="FunFam" id="3.30.420.40:FF:000004">
    <property type="entry name" value="Molecular chaperone DnaK"/>
    <property type="match status" value="1"/>
</dbReference>
<dbReference type="FunFam" id="3.90.640.10:FF:000003">
    <property type="entry name" value="Molecular chaperone DnaK"/>
    <property type="match status" value="1"/>
</dbReference>
<dbReference type="Gene3D" id="1.20.1270.10">
    <property type="match status" value="1"/>
</dbReference>
<dbReference type="Gene3D" id="3.30.420.40">
    <property type="match status" value="2"/>
</dbReference>
<dbReference type="Gene3D" id="3.90.640.10">
    <property type="entry name" value="Actin, Chain A, domain 4"/>
    <property type="match status" value="1"/>
</dbReference>
<dbReference type="Gene3D" id="2.60.34.10">
    <property type="entry name" value="Substrate Binding Domain Of DNAk, Chain A, domain 1"/>
    <property type="match status" value="1"/>
</dbReference>
<dbReference type="HAMAP" id="MF_00332">
    <property type="entry name" value="DnaK"/>
    <property type="match status" value="1"/>
</dbReference>
<dbReference type="InterPro" id="IPR043129">
    <property type="entry name" value="ATPase_NBD"/>
</dbReference>
<dbReference type="InterPro" id="IPR012725">
    <property type="entry name" value="Chaperone_DnaK"/>
</dbReference>
<dbReference type="InterPro" id="IPR018181">
    <property type="entry name" value="Heat_shock_70_CS"/>
</dbReference>
<dbReference type="InterPro" id="IPR029048">
    <property type="entry name" value="HSP70_C_sf"/>
</dbReference>
<dbReference type="InterPro" id="IPR029047">
    <property type="entry name" value="HSP70_peptide-bd_sf"/>
</dbReference>
<dbReference type="InterPro" id="IPR013126">
    <property type="entry name" value="Hsp_70_fam"/>
</dbReference>
<dbReference type="NCBIfam" id="NF001413">
    <property type="entry name" value="PRK00290.1"/>
    <property type="match status" value="1"/>
</dbReference>
<dbReference type="NCBIfam" id="NF003520">
    <property type="entry name" value="PRK05183.1"/>
    <property type="match status" value="1"/>
</dbReference>
<dbReference type="NCBIfam" id="TIGR02350">
    <property type="entry name" value="prok_dnaK"/>
    <property type="match status" value="1"/>
</dbReference>
<dbReference type="PANTHER" id="PTHR19375">
    <property type="entry name" value="HEAT SHOCK PROTEIN 70KDA"/>
    <property type="match status" value="1"/>
</dbReference>
<dbReference type="Pfam" id="PF00012">
    <property type="entry name" value="HSP70"/>
    <property type="match status" value="1"/>
</dbReference>
<dbReference type="PRINTS" id="PR00301">
    <property type="entry name" value="HEATSHOCK70"/>
</dbReference>
<dbReference type="SUPFAM" id="SSF53067">
    <property type="entry name" value="Actin-like ATPase domain"/>
    <property type="match status" value="2"/>
</dbReference>
<dbReference type="SUPFAM" id="SSF100934">
    <property type="entry name" value="Heat shock protein 70kD (HSP70), C-terminal subdomain"/>
    <property type="match status" value="1"/>
</dbReference>
<dbReference type="SUPFAM" id="SSF100920">
    <property type="entry name" value="Heat shock protein 70kD (HSP70), peptide-binding domain"/>
    <property type="match status" value="1"/>
</dbReference>
<dbReference type="PROSITE" id="PS00329">
    <property type="entry name" value="HSP70_2"/>
    <property type="match status" value="1"/>
</dbReference>
<dbReference type="PROSITE" id="PS01036">
    <property type="entry name" value="HSP70_3"/>
    <property type="match status" value="1"/>
</dbReference>
<reference key="1">
    <citation type="journal article" date="2002" name="Proc. Natl. Acad. Sci. U.S.A.">
        <title>The genome sequence of the facultative intracellular pathogen Brucella melitensis.</title>
        <authorList>
            <person name="DelVecchio V.G."/>
            <person name="Kapatral V."/>
            <person name="Redkar R.J."/>
            <person name="Patra G."/>
            <person name="Mujer C."/>
            <person name="Los T."/>
            <person name="Ivanova N."/>
            <person name="Anderson I."/>
            <person name="Bhattacharyya A."/>
            <person name="Lykidis A."/>
            <person name="Reznik G."/>
            <person name="Jablonski L."/>
            <person name="Larsen N."/>
            <person name="D'Souza M."/>
            <person name="Bernal A."/>
            <person name="Mazur M."/>
            <person name="Goltsman E."/>
            <person name="Selkov E."/>
            <person name="Elzer P.H."/>
            <person name="Hagius S."/>
            <person name="O'Callaghan D."/>
            <person name="Letesson J.-J."/>
            <person name="Haselkorn R."/>
            <person name="Kyrpides N.C."/>
            <person name="Overbeek R."/>
        </authorList>
    </citation>
    <scope>NUCLEOTIDE SEQUENCE [LARGE SCALE GENOMIC DNA]</scope>
    <source>
        <strain>ATCC 23456 / CCUG 17765 / NCTC 10094 / 16M</strain>
    </source>
</reference>
<proteinExistence type="inferred from homology"/>
<gene>
    <name type="primary">dnaK</name>
    <name type="ordered locus">BMEI2002</name>
</gene>
<protein>
    <recommendedName>
        <fullName>Chaperone protein DnaK</fullName>
    </recommendedName>
    <alternativeName>
        <fullName>HSP70</fullName>
    </alternativeName>
    <alternativeName>
        <fullName>Heat shock 70 kDa protein</fullName>
    </alternativeName>
    <alternativeName>
        <fullName>Heat shock protein 70</fullName>
    </alternativeName>
</protein>
<sequence length="637" mass="68212">MAKVIGIDMGTTNSCVAVMDGKNAKVIENAEGARTTPSIIAFTDGDERLAGQPAKRQAVTNPEGTLFAVKRLIGRRYDDPMVTKDKDLVPYKIVKGDNGDAWVEVHGKKYSPSQISAMILQKMKETAESYLGETVTQAVITVPAYFNDAQRQATKDAGKIAGLEVLRIINEPTAAALAYGLDKSEGKTIAVYDLGGGTFDVSVLEIGDGVFEVKSTNGDTFLGGEDFDIRLVEYLVAEFKKESGIDLKNDKLALQRLKEAAEKAKIELSSSQQTEINLPFITADQTGPKHLAIKLSRAKFESLVDDLVQRTVEPCKAALKDAGLKAGEIDEVVLVGGMTRMPKIQEVVKAFFGKEPHKGVNPDEVVAMGAAIQGGVLQGDVKDVLLLDVTPLSLGIETLGGVFTRLIERNTTIPTKKSQTFSTAEDNQSAVTIRVFQGEREMAADNKLLGQFDLVGIPPAPRGVPQIEVTFDIDANGIVNVSAKDKGTGKEHQIRIQASGGLSDADIEKMVKDAEANAEADKKRRESVEAKNQAESLVHSTEKSLAEYGDKVSADDKKAIEDAIAALKTSLEGEDAEDIKAKTQALAEVSMKLGQAMYEAAQAAEGAGAEGGEQASSSKDDVVDADYEEIDDNKKSS</sequence>
<organism>
    <name type="scientific">Brucella melitensis biotype 1 (strain ATCC 23456 / CCUG 17765 / NCTC 10094 / 16M)</name>
    <dbReference type="NCBI Taxonomy" id="224914"/>
    <lineage>
        <taxon>Bacteria</taxon>
        <taxon>Pseudomonadati</taxon>
        <taxon>Pseudomonadota</taxon>
        <taxon>Alphaproteobacteria</taxon>
        <taxon>Hyphomicrobiales</taxon>
        <taxon>Brucellaceae</taxon>
        <taxon>Brucella/Ochrobactrum group</taxon>
        <taxon>Brucella</taxon>
    </lineage>
</organism>
<accession>Q8YE76</accession>
<comment type="function">
    <text evidence="1">Acts as a chaperone.</text>
</comment>
<comment type="induction">
    <text evidence="1">By stress conditions e.g. heat shock (By similarity).</text>
</comment>
<comment type="similarity">
    <text evidence="3">Belongs to the heat shock protein 70 family.</text>
</comment>
<comment type="sequence caution" evidence="3">
    <conflict type="erroneous initiation">
        <sequence resource="EMBL-CDS" id="AAL53183"/>
    </conflict>
</comment>